<accession>P21558</accession>
<accession>M0GQM6</accession>
<sequence>MSQDNEYGAGQIQVLEGLEAVRKRPAMYIGSTDSRGLHHLVYEVVDNSIDEALAGHCDAIEVALHEDGSVSVTDNGRGIPVDTHEQYDRPALEVIMTVLHAGGKFDNKSYQVSGGLHGVGVSVVNALSSELEVEVKRDGAVWTHRFEVGEPQVEEFERVRDLEPGEDTGTTIRFWPDDGIFETTEFDFKTLENRLRELAFLNSGVEISLSDERTDESSTFLFEGGIREFVEYLNETKTALHDDVIYYDDESEGIEVEIAMQATDELQGSIHAFANNINTREGGTHLTGFKTALTRVVNDYANSHDMLDDLDGDNLRGEDVREGLTAVISVKHPDPQFEGQTKTKLGNSEVRGIVESVTHQQLGTFFEENPDTATAIISKAVEAARARKAAKQAEELTRRKSALESTSLPGKLADCQSRDPSESELFIVEGDSAGGSAKQGRDRKFQAILPLKGKILNVEKHRLDRILENDEIRALITAIGGGVGDEFDIEKARYQRLILMTDADVDGAHIRTLLLTLLYRHMRPLIEAGYVYAAQPPLYRVRYRGNTYDAMDEAERDRIIEEECNGNPTQVQRFKGLGEMNPDQLWDTTMNPENRVLKRITVEDAAAADRMFNILMGDAVGPRKQFIKDHANDAEWVDI</sequence>
<gene>
    <name evidence="1" type="primary">gyrB</name>
    <name type="ORF">C456_09163</name>
</gene>
<proteinExistence type="evidence at protein level"/>
<reference key="1">
    <citation type="journal article" date="1991" name="J. Bacteriol.">
        <title>Mutations in DNA gyrase result in novobiocin resistance in halophilic archaebacteria.</title>
        <authorList>
            <person name="Holmes M.L."/>
            <person name="Dyall-Smith M.L."/>
        </authorList>
    </citation>
    <scope>NUCLEOTIDE SEQUENCE [GENOMIC DNA] OF MUTANT NOVR</scope>
    <scope>INDUCTION</scope>
    <scope>ANTIBIOTIC RESISTANCE</scope>
    <scope>MUTAGENESIS OF ASP-82; SER-122 AND ARG-137</scope>
    <source>
        <strain>DSM 14919 / CCM 7023 / CIP 107410 / JCM 9276 / NCIMB 13854 / Aa 2.2</strain>
    </source>
</reference>
<reference key="2">
    <citation type="journal article" date="2014" name="PLoS Genet.">
        <title>Phylogenetically driven sequencing of extremely halophilic archaea reveals strategies for static and dynamic osmo-response.</title>
        <authorList>
            <person name="Becker E.A."/>
            <person name="Seitzer P.M."/>
            <person name="Tritt A."/>
            <person name="Larsen D."/>
            <person name="Krusor M."/>
            <person name="Yao A.I."/>
            <person name="Wu D."/>
            <person name="Madern D."/>
            <person name="Eisen J.A."/>
            <person name="Darling A.E."/>
            <person name="Facciotti M.T."/>
        </authorList>
    </citation>
    <scope>NUCLEOTIDE SEQUENCE [LARGE SCALE GENOMIC DNA]</scope>
    <source>
        <strain>DSM 14919 / CCM 7023 / CIP 107410 / JCM 9276 / NCIMB 13854 / Aa 2.2</strain>
    </source>
</reference>
<feature type="chain" id="PRO_0000145361" description="DNA gyrase subunit B">
    <location>
        <begin position="1"/>
        <end position="639"/>
    </location>
</feature>
<feature type="domain" description="Toprim" evidence="1">
    <location>
        <begin position="423"/>
        <end position="537"/>
    </location>
</feature>
<feature type="region of interest" description="Disordered" evidence="2">
    <location>
        <begin position="392"/>
        <end position="417"/>
    </location>
</feature>
<feature type="compositionally biased region" description="Basic and acidic residues" evidence="2">
    <location>
        <begin position="392"/>
        <end position="402"/>
    </location>
</feature>
<feature type="binding site" evidence="1">
    <location>
        <position position="429"/>
    </location>
    <ligand>
        <name>Mg(2+)</name>
        <dbReference type="ChEBI" id="CHEBI:18420"/>
        <label>1</label>
        <note>catalytic</note>
    </ligand>
</feature>
<feature type="binding site" evidence="1">
    <location>
        <position position="502"/>
    </location>
    <ligand>
        <name>Mg(2+)</name>
        <dbReference type="ChEBI" id="CHEBI:18420"/>
        <label>1</label>
        <note>catalytic</note>
    </ligand>
</feature>
<feature type="binding site" evidence="1">
    <location>
        <position position="502"/>
    </location>
    <ligand>
        <name>Mg(2+)</name>
        <dbReference type="ChEBI" id="CHEBI:18420"/>
        <label>2</label>
    </ligand>
</feature>
<feature type="binding site" evidence="1">
    <location>
        <position position="504"/>
    </location>
    <ligand>
        <name>Mg(2+)</name>
        <dbReference type="ChEBI" id="CHEBI:18420"/>
        <label>2</label>
    </ligand>
</feature>
<feature type="site" description="Interaction with DNA" evidence="1">
    <location>
        <position position="454"/>
    </location>
</feature>
<feature type="site" description="Interaction with DNA" evidence="1">
    <location>
        <position position="457"/>
    </location>
</feature>
<feature type="mutagenesis site" description="In Nov(r); Allows cells to grow in about 1000 times higher novobiocin concentrations; when associated with T-122 and H-137." evidence="3">
    <original>D</original>
    <variation>G</variation>
    <location>
        <position position="82"/>
    </location>
</feature>
<feature type="mutagenesis site" description="In Nov(r); Allows cells to grow in about 1000 times higher novobiocin concentrations; when associated with G-82 and H-137." evidence="3">
    <original>S</original>
    <variation>T</variation>
    <location>
        <position position="122"/>
    </location>
</feature>
<feature type="mutagenesis site" description="In Nov(r); Allows cells to grow in about 1000 times higher novobiocin concentrations; when associated with G-82 and T-122." evidence="3">
    <original>R</original>
    <variation>H</variation>
    <location>
        <position position="137"/>
    </location>
</feature>
<protein>
    <recommendedName>
        <fullName evidence="1">DNA gyrase subunit B</fullName>
        <ecNumber evidence="1">5.6.2.2</ecNumber>
    </recommendedName>
</protein>
<keyword id="KW-0046">Antibiotic resistance</keyword>
<keyword id="KW-0067">ATP-binding</keyword>
<keyword id="KW-0963">Cytoplasm</keyword>
<keyword id="KW-0238">DNA-binding</keyword>
<keyword id="KW-0413">Isomerase</keyword>
<keyword id="KW-0460">Magnesium</keyword>
<keyword id="KW-0479">Metal-binding</keyword>
<keyword id="KW-0547">Nucleotide-binding</keyword>
<keyword id="KW-0799">Topoisomerase</keyword>
<evidence type="ECO:0000255" key="1">
    <source>
        <dbReference type="HAMAP-Rule" id="MF_01898"/>
    </source>
</evidence>
<evidence type="ECO:0000256" key="2">
    <source>
        <dbReference type="SAM" id="MobiDB-lite"/>
    </source>
</evidence>
<evidence type="ECO:0000269" key="3">
    <source>
    </source>
</evidence>
<dbReference type="EC" id="5.6.2.2" evidence="1"/>
<dbReference type="EMBL" id="M38373">
    <property type="protein sequence ID" value="AAB09605.1"/>
    <property type="molecule type" value="Genomic_DNA"/>
</dbReference>
<dbReference type="EMBL" id="AOLH01000015">
    <property type="protein sequence ID" value="ELZ74526.1"/>
    <property type="molecule type" value="Genomic_DNA"/>
</dbReference>
<dbReference type="RefSeq" id="WP_004063239.1">
    <property type="nucleotide sequence ID" value="NZ_AOLH01000015.1"/>
</dbReference>
<dbReference type="SMR" id="P21558"/>
<dbReference type="GeneID" id="80787120"/>
<dbReference type="PATRIC" id="fig|1230452.3.peg.1758"/>
<dbReference type="Proteomes" id="UP000011535">
    <property type="component" value="Unassembled WGS sequence"/>
</dbReference>
<dbReference type="GO" id="GO:0005694">
    <property type="term" value="C:chromosome"/>
    <property type="evidence" value="ECO:0007669"/>
    <property type="project" value="InterPro"/>
</dbReference>
<dbReference type="GO" id="GO:0005737">
    <property type="term" value="C:cytoplasm"/>
    <property type="evidence" value="ECO:0007669"/>
    <property type="project" value="UniProtKB-SubCell"/>
</dbReference>
<dbReference type="GO" id="GO:0005524">
    <property type="term" value="F:ATP binding"/>
    <property type="evidence" value="ECO:0007669"/>
    <property type="project" value="UniProtKB-UniRule"/>
</dbReference>
<dbReference type="GO" id="GO:0003677">
    <property type="term" value="F:DNA binding"/>
    <property type="evidence" value="ECO:0007669"/>
    <property type="project" value="UniProtKB-KW"/>
</dbReference>
<dbReference type="GO" id="GO:0003918">
    <property type="term" value="F:DNA topoisomerase type II (double strand cut, ATP-hydrolyzing) activity"/>
    <property type="evidence" value="ECO:0007669"/>
    <property type="project" value="UniProtKB-UniRule"/>
</dbReference>
<dbReference type="GO" id="GO:0046872">
    <property type="term" value="F:metal ion binding"/>
    <property type="evidence" value="ECO:0007669"/>
    <property type="project" value="UniProtKB-KW"/>
</dbReference>
<dbReference type="GO" id="GO:0006265">
    <property type="term" value="P:DNA topological change"/>
    <property type="evidence" value="ECO:0007669"/>
    <property type="project" value="UniProtKB-UniRule"/>
</dbReference>
<dbReference type="GO" id="GO:0006261">
    <property type="term" value="P:DNA-templated DNA replication"/>
    <property type="evidence" value="ECO:0007669"/>
    <property type="project" value="UniProtKB-UniRule"/>
</dbReference>
<dbReference type="GO" id="GO:0046677">
    <property type="term" value="P:response to antibiotic"/>
    <property type="evidence" value="ECO:0007669"/>
    <property type="project" value="UniProtKB-KW"/>
</dbReference>
<dbReference type="CDD" id="cd16928">
    <property type="entry name" value="HATPase_GyrB-like"/>
    <property type="match status" value="1"/>
</dbReference>
<dbReference type="CDD" id="cd00822">
    <property type="entry name" value="TopoII_Trans_DNA_gyrase"/>
    <property type="match status" value="1"/>
</dbReference>
<dbReference type="CDD" id="cd03366">
    <property type="entry name" value="TOPRIM_TopoIIA_GyrB"/>
    <property type="match status" value="1"/>
</dbReference>
<dbReference type="FunFam" id="3.30.230.10:FF:000005">
    <property type="entry name" value="DNA gyrase subunit B"/>
    <property type="match status" value="1"/>
</dbReference>
<dbReference type="FunFam" id="3.30.565.10:FF:000002">
    <property type="entry name" value="DNA gyrase subunit B"/>
    <property type="match status" value="1"/>
</dbReference>
<dbReference type="FunFam" id="3.40.50.670:FF:000002">
    <property type="entry name" value="DNA gyrase subunit B"/>
    <property type="match status" value="1"/>
</dbReference>
<dbReference type="Gene3D" id="3.30.230.10">
    <property type="match status" value="1"/>
</dbReference>
<dbReference type="Gene3D" id="3.40.50.670">
    <property type="match status" value="1"/>
</dbReference>
<dbReference type="Gene3D" id="3.30.565.10">
    <property type="entry name" value="Histidine kinase-like ATPase, C-terminal domain"/>
    <property type="match status" value="1"/>
</dbReference>
<dbReference type="HAMAP" id="MF_01898">
    <property type="entry name" value="GyrB"/>
    <property type="match status" value="1"/>
</dbReference>
<dbReference type="InterPro" id="IPR002288">
    <property type="entry name" value="DNA_gyrase_B_C"/>
</dbReference>
<dbReference type="InterPro" id="IPR011557">
    <property type="entry name" value="GyrB"/>
</dbReference>
<dbReference type="InterPro" id="IPR036890">
    <property type="entry name" value="HATPase_C_sf"/>
</dbReference>
<dbReference type="InterPro" id="IPR020568">
    <property type="entry name" value="Ribosomal_Su5_D2-typ_SF"/>
</dbReference>
<dbReference type="InterPro" id="IPR014721">
    <property type="entry name" value="Ribsml_uS5_D2-typ_fold_subgr"/>
</dbReference>
<dbReference type="InterPro" id="IPR001241">
    <property type="entry name" value="Topo_IIA"/>
</dbReference>
<dbReference type="InterPro" id="IPR013760">
    <property type="entry name" value="Topo_IIA-like_dom_sf"/>
</dbReference>
<dbReference type="InterPro" id="IPR000565">
    <property type="entry name" value="Topo_IIA_B"/>
</dbReference>
<dbReference type="InterPro" id="IPR013759">
    <property type="entry name" value="Topo_IIA_B_C"/>
</dbReference>
<dbReference type="InterPro" id="IPR013506">
    <property type="entry name" value="Topo_IIA_bsu_dom2"/>
</dbReference>
<dbReference type="InterPro" id="IPR018522">
    <property type="entry name" value="TopoIIA_CS"/>
</dbReference>
<dbReference type="InterPro" id="IPR006171">
    <property type="entry name" value="TOPRIM_dom"/>
</dbReference>
<dbReference type="InterPro" id="IPR034160">
    <property type="entry name" value="TOPRIM_GyrB"/>
</dbReference>
<dbReference type="NCBIfam" id="TIGR01059">
    <property type="entry name" value="gyrB"/>
    <property type="match status" value="1"/>
</dbReference>
<dbReference type="NCBIfam" id="NF004189">
    <property type="entry name" value="PRK05644.1"/>
    <property type="match status" value="1"/>
</dbReference>
<dbReference type="NCBIfam" id="NF011501">
    <property type="entry name" value="PRK14939.1"/>
    <property type="match status" value="1"/>
</dbReference>
<dbReference type="PANTHER" id="PTHR45866:SF1">
    <property type="entry name" value="DNA GYRASE SUBUNIT B, MITOCHONDRIAL"/>
    <property type="match status" value="1"/>
</dbReference>
<dbReference type="PANTHER" id="PTHR45866">
    <property type="entry name" value="DNA GYRASE/TOPOISOMERASE SUBUNIT B"/>
    <property type="match status" value="1"/>
</dbReference>
<dbReference type="Pfam" id="PF00204">
    <property type="entry name" value="DNA_gyraseB"/>
    <property type="match status" value="1"/>
</dbReference>
<dbReference type="Pfam" id="PF00986">
    <property type="entry name" value="DNA_gyraseB_C"/>
    <property type="match status" value="1"/>
</dbReference>
<dbReference type="Pfam" id="PF02518">
    <property type="entry name" value="HATPase_c"/>
    <property type="match status" value="1"/>
</dbReference>
<dbReference type="Pfam" id="PF01751">
    <property type="entry name" value="Toprim"/>
    <property type="match status" value="1"/>
</dbReference>
<dbReference type="PRINTS" id="PR01159">
    <property type="entry name" value="DNAGYRASEB"/>
</dbReference>
<dbReference type="PRINTS" id="PR00418">
    <property type="entry name" value="TPI2FAMILY"/>
</dbReference>
<dbReference type="SMART" id="SM00387">
    <property type="entry name" value="HATPase_c"/>
    <property type="match status" value="1"/>
</dbReference>
<dbReference type="SMART" id="SM00433">
    <property type="entry name" value="TOP2c"/>
    <property type="match status" value="1"/>
</dbReference>
<dbReference type="SUPFAM" id="SSF55874">
    <property type="entry name" value="ATPase domain of HSP90 chaperone/DNA topoisomerase II/histidine kinase"/>
    <property type="match status" value="1"/>
</dbReference>
<dbReference type="SUPFAM" id="SSF54211">
    <property type="entry name" value="Ribosomal protein S5 domain 2-like"/>
    <property type="match status" value="1"/>
</dbReference>
<dbReference type="SUPFAM" id="SSF56719">
    <property type="entry name" value="Type II DNA topoisomerase"/>
    <property type="match status" value="1"/>
</dbReference>
<dbReference type="PROSITE" id="PS00177">
    <property type="entry name" value="TOPOISOMERASE_II"/>
    <property type="match status" value="1"/>
</dbReference>
<dbReference type="PROSITE" id="PS50880">
    <property type="entry name" value="TOPRIM"/>
    <property type="match status" value="1"/>
</dbReference>
<comment type="function">
    <text evidence="1">A type II topoisomerase that negatively supercoils closed circular double-stranded (ds) DNA in an ATP-dependent manner to modulate DNA topology and maintain chromosomes in an underwound state. Negative supercoiling favors strand separation, and DNA replication, transcription, recombination and repair, all of which involve strand separation. Also able to catalyze the interconversion of other topological isomers of dsDNA rings, including catenanes and knotted rings. Type II topoisomerases break and join 2 DNA strands simultaneously in an ATP-dependent manner.</text>
</comment>
<comment type="catalytic activity">
    <reaction evidence="1">
        <text>ATP-dependent breakage, passage and rejoining of double-stranded DNA.</text>
        <dbReference type="EC" id="5.6.2.2"/>
    </reaction>
</comment>
<comment type="cofactor">
    <cofactor evidence="1">
        <name>Mg(2+)</name>
        <dbReference type="ChEBI" id="CHEBI:18420"/>
    </cofactor>
    <cofactor evidence="1">
        <name>Mn(2+)</name>
        <dbReference type="ChEBI" id="CHEBI:29035"/>
    </cofactor>
    <cofactor evidence="1">
        <name>Ca(2+)</name>
        <dbReference type="ChEBI" id="CHEBI:29108"/>
    </cofactor>
    <text evidence="1">Binds two Mg(2+) per subunit. The magnesium ions form salt bridges with both the protein and the DNA. Can also accept other divalent metal cations, such as Mn(2+) or Ca(2+).</text>
</comment>
<comment type="subunit">
    <text evidence="1">Heterotetramer, composed of two GyrA and two GyrB chains. In the heterotetramer, GyrA contains the active site tyrosine that forms a transient covalent intermediate with DNA, while GyrB binds cofactors and catalyzes ATP hydrolysis.</text>
</comment>
<comment type="subcellular location">
    <subcellularLocation>
        <location evidence="1">Cytoplasm</location>
    </subcellularLocation>
</comment>
<comment type="induction">
    <text evidence="3">Expressed in mid-log phase; not induced by novobiocin.</text>
</comment>
<comment type="miscellaneous">
    <text>Novobiocin inhibits DNA gyrase activity by binding to GyrB and blocking access of ATP to its binding site on this subunit. The mutations in GyrB causing novobiocin-resistance probably produce a gyrase that binds novobiocin less avidly.</text>
</comment>
<comment type="miscellaneous">
    <text evidence="1">Few gyrases are as efficient as E.coli at forming negative supercoils. Not all organisms have 2 type II topoisomerases; in organisms with a single type II topoisomerase this enzyme also has to decatenate newly replicated chromosomes.</text>
</comment>
<comment type="similarity">
    <text evidence="1">Belongs to the type II topoisomerase GyrB family.</text>
</comment>
<name>GYRB_HALL2</name>
<organism>
    <name type="scientific">Haloferax lucentense (strain DSM 14919 / JCM 9276 / NCIMB 13854 / Aa 2.2)</name>
    <name type="common">Haloferax alicantei</name>
    <dbReference type="NCBI Taxonomy" id="1230452"/>
    <lineage>
        <taxon>Archaea</taxon>
        <taxon>Methanobacteriati</taxon>
        <taxon>Methanobacteriota</taxon>
        <taxon>Stenosarchaea group</taxon>
        <taxon>Halobacteria</taxon>
        <taxon>Halobacteriales</taxon>
        <taxon>Haloferacaceae</taxon>
        <taxon>Haloferax</taxon>
    </lineage>
</organism>